<gene>
    <name evidence="1" type="primary">rnc</name>
    <name type="ordered locus">ABC2299</name>
</gene>
<evidence type="ECO:0000255" key="1">
    <source>
        <dbReference type="HAMAP-Rule" id="MF_00104"/>
    </source>
</evidence>
<evidence type="ECO:0000256" key="2">
    <source>
        <dbReference type="SAM" id="MobiDB-lite"/>
    </source>
</evidence>
<name>RNC_SHOC1</name>
<protein>
    <recommendedName>
        <fullName evidence="1">Ribonuclease 3</fullName>
        <ecNumber evidence="1">3.1.26.3</ecNumber>
    </recommendedName>
    <alternativeName>
        <fullName evidence="1">Ribonuclease III</fullName>
        <shortName evidence="1">RNase III</shortName>
    </alternativeName>
</protein>
<dbReference type="EC" id="3.1.26.3" evidence="1"/>
<dbReference type="EMBL" id="AP006627">
    <property type="protein sequence ID" value="BAD64834.1"/>
    <property type="molecule type" value="Genomic_DNA"/>
</dbReference>
<dbReference type="RefSeq" id="WP_011247142.1">
    <property type="nucleotide sequence ID" value="NC_006582.1"/>
</dbReference>
<dbReference type="SMR" id="Q5WFM6"/>
<dbReference type="STRING" id="66692.ABC2299"/>
<dbReference type="GeneID" id="86926463"/>
<dbReference type="KEGG" id="bcl:ABC2299"/>
<dbReference type="eggNOG" id="COG0571">
    <property type="taxonomic scope" value="Bacteria"/>
</dbReference>
<dbReference type="HOGENOM" id="CLU_000907_1_3_9"/>
<dbReference type="OrthoDB" id="9805026at2"/>
<dbReference type="Proteomes" id="UP000001168">
    <property type="component" value="Chromosome"/>
</dbReference>
<dbReference type="GO" id="GO:0005737">
    <property type="term" value="C:cytoplasm"/>
    <property type="evidence" value="ECO:0007669"/>
    <property type="project" value="UniProtKB-SubCell"/>
</dbReference>
<dbReference type="GO" id="GO:0003725">
    <property type="term" value="F:double-stranded RNA binding"/>
    <property type="evidence" value="ECO:0007669"/>
    <property type="project" value="TreeGrafter"/>
</dbReference>
<dbReference type="GO" id="GO:0046872">
    <property type="term" value="F:metal ion binding"/>
    <property type="evidence" value="ECO:0007669"/>
    <property type="project" value="UniProtKB-KW"/>
</dbReference>
<dbReference type="GO" id="GO:0004525">
    <property type="term" value="F:ribonuclease III activity"/>
    <property type="evidence" value="ECO:0007669"/>
    <property type="project" value="UniProtKB-UniRule"/>
</dbReference>
<dbReference type="GO" id="GO:0019843">
    <property type="term" value="F:rRNA binding"/>
    <property type="evidence" value="ECO:0007669"/>
    <property type="project" value="UniProtKB-KW"/>
</dbReference>
<dbReference type="GO" id="GO:0006397">
    <property type="term" value="P:mRNA processing"/>
    <property type="evidence" value="ECO:0007669"/>
    <property type="project" value="UniProtKB-UniRule"/>
</dbReference>
<dbReference type="GO" id="GO:0010468">
    <property type="term" value="P:regulation of gene expression"/>
    <property type="evidence" value="ECO:0007669"/>
    <property type="project" value="TreeGrafter"/>
</dbReference>
<dbReference type="GO" id="GO:0006364">
    <property type="term" value="P:rRNA processing"/>
    <property type="evidence" value="ECO:0007669"/>
    <property type="project" value="UniProtKB-UniRule"/>
</dbReference>
<dbReference type="GO" id="GO:0008033">
    <property type="term" value="P:tRNA processing"/>
    <property type="evidence" value="ECO:0007669"/>
    <property type="project" value="UniProtKB-KW"/>
</dbReference>
<dbReference type="CDD" id="cd10845">
    <property type="entry name" value="DSRM_RNAse_III_family"/>
    <property type="match status" value="1"/>
</dbReference>
<dbReference type="CDD" id="cd00593">
    <property type="entry name" value="RIBOc"/>
    <property type="match status" value="1"/>
</dbReference>
<dbReference type="FunFam" id="1.10.1520.10:FF:000001">
    <property type="entry name" value="Ribonuclease 3"/>
    <property type="match status" value="1"/>
</dbReference>
<dbReference type="FunFam" id="3.30.160.20:FF:000003">
    <property type="entry name" value="Ribonuclease 3"/>
    <property type="match status" value="1"/>
</dbReference>
<dbReference type="Gene3D" id="3.30.160.20">
    <property type="match status" value="1"/>
</dbReference>
<dbReference type="Gene3D" id="1.10.1520.10">
    <property type="entry name" value="Ribonuclease III domain"/>
    <property type="match status" value="1"/>
</dbReference>
<dbReference type="HAMAP" id="MF_00104">
    <property type="entry name" value="RNase_III"/>
    <property type="match status" value="1"/>
</dbReference>
<dbReference type="InterPro" id="IPR014720">
    <property type="entry name" value="dsRBD_dom"/>
</dbReference>
<dbReference type="InterPro" id="IPR011907">
    <property type="entry name" value="RNase_III"/>
</dbReference>
<dbReference type="InterPro" id="IPR000999">
    <property type="entry name" value="RNase_III_dom"/>
</dbReference>
<dbReference type="InterPro" id="IPR036389">
    <property type="entry name" value="RNase_III_sf"/>
</dbReference>
<dbReference type="NCBIfam" id="TIGR02191">
    <property type="entry name" value="RNaseIII"/>
    <property type="match status" value="1"/>
</dbReference>
<dbReference type="PANTHER" id="PTHR11207:SF0">
    <property type="entry name" value="RIBONUCLEASE 3"/>
    <property type="match status" value="1"/>
</dbReference>
<dbReference type="PANTHER" id="PTHR11207">
    <property type="entry name" value="RIBONUCLEASE III"/>
    <property type="match status" value="1"/>
</dbReference>
<dbReference type="Pfam" id="PF00035">
    <property type="entry name" value="dsrm"/>
    <property type="match status" value="1"/>
</dbReference>
<dbReference type="Pfam" id="PF14622">
    <property type="entry name" value="Ribonucleas_3_3"/>
    <property type="match status" value="1"/>
</dbReference>
<dbReference type="SMART" id="SM00358">
    <property type="entry name" value="DSRM"/>
    <property type="match status" value="1"/>
</dbReference>
<dbReference type="SMART" id="SM00535">
    <property type="entry name" value="RIBOc"/>
    <property type="match status" value="1"/>
</dbReference>
<dbReference type="SUPFAM" id="SSF54768">
    <property type="entry name" value="dsRNA-binding domain-like"/>
    <property type="match status" value="1"/>
</dbReference>
<dbReference type="SUPFAM" id="SSF69065">
    <property type="entry name" value="RNase III domain-like"/>
    <property type="match status" value="1"/>
</dbReference>
<dbReference type="PROSITE" id="PS50137">
    <property type="entry name" value="DS_RBD"/>
    <property type="match status" value="1"/>
</dbReference>
<dbReference type="PROSITE" id="PS00517">
    <property type="entry name" value="RNASE_3_1"/>
    <property type="match status" value="1"/>
</dbReference>
<dbReference type="PROSITE" id="PS50142">
    <property type="entry name" value="RNASE_3_2"/>
    <property type="match status" value="1"/>
</dbReference>
<feature type="chain" id="PRO_0000228493" description="Ribonuclease 3">
    <location>
        <begin position="1"/>
        <end position="260"/>
    </location>
</feature>
<feature type="domain" description="RNase III" evidence="1">
    <location>
        <begin position="33"/>
        <end position="162"/>
    </location>
</feature>
<feature type="domain" description="DRBM" evidence="1">
    <location>
        <begin position="188"/>
        <end position="257"/>
    </location>
</feature>
<feature type="region of interest" description="Disordered" evidence="2">
    <location>
        <begin position="1"/>
        <end position="24"/>
    </location>
</feature>
<feature type="compositionally biased region" description="Basic and acidic residues" evidence="2">
    <location>
        <begin position="12"/>
        <end position="24"/>
    </location>
</feature>
<feature type="active site" evidence="1">
    <location>
        <position position="79"/>
    </location>
</feature>
<feature type="active site" evidence="1">
    <location>
        <position position="151"/>
    </location>
</feature>
<feature type="binding site" evidence="1">
    <location>
        <position position="75"/>
    </location>
    <ligand>
        <name>Mg(2+)</name>
        <dbReference type="ChEBI" id="CHEBI:18420"/>
    </ligand>
</feature>
<feature type="binding site" evidence="1">
    <location>
        <position position="148"/>
    </location>
    <ligand>
        <name>Mg(2+)</name>
        <dbReference type="ChEBI" id="CHEBI:18420"/>
    </ligand>
</feature>
<feature type="binding site" evidence="1">
    <location>
        <position position="151"/>
    </location>
    <ligand>
        <name>Mg(2+)</name>
        <dbReference type="ChEBI" id="CHEBI:18420"/>
    </ligand>
</feature>
<reference key="1">
    <citation type="submission" date="2003-10" db="EMBL/GenBank/DDBJ databases">
        <title>The complete genome sequence of the alkaliphilic Bacillus clausii KSM-K16.</title>
        <authorList>
            <person name="Takaki Y."/>
            <person name="Kageyama Y."/>
            <person name="Shimamura S."/>
            <person name="Suzuki H."/>
            <person name="Nishi S."/>
            <person name="Hatada Y."/>
            <person name="Kawai S."/>
            <person name="Ito S."/>
            <person name="Horikoshi K."/>
        </authorList>
    </citation>
    <scope>NUCLEOTIDE SEQUENCE [LARGE SCALE GENOMIC DNA]</scope>
    <source>
        <strain>KSM-K16</strain>
    </source>
</reference>
<sequence length="260" mass="29878">MAQSSKYQRKPRSGERKRSQRRLELTEEQKKQFDDLLVRTGLTFENRKLLIQAFTHSSYVNEQRIFSSSDNERLEFLGDAVLELAVSQYLFKTYKNMSEGDMTKLRASIVCEPSLARFAEELQFGKLVLLGKGEEVTGGRTRPALLADVFEAFIGALYMDQGLEPVFMFLARFMYPKIKEGAFTYKMDFKSQLQEFVQRDNRGQIRYLIVQERGPAHDREFVSDVQLNEETIGTGTGRSKKEAEQLAAKQALLALNQKES</sequence>
<accession>Q5WFM6</accession>
<proteinExistence type="inferred from homology"/>
<keyword id="KW-0963">Cytoplasm</keyword>
<keyword id="KW-0255">Endonuclease</keyword>
<keyword id="KW-0378">Hydrolase</keyword>
<keyword id="KW-0460">Magnesium</keyword>
<keyword id="KW-0479">Metal-binding</keyword>
<keyword id="KW-0507">mRNA processing</keyword>
<keyword id="KW-0540">Nuclease</keyword>
<keyword id="KW-1185">Reference proteome</keyword>
<keyword id="KW-0694">RNA-binding</keyword>
<keyword id="KW-0698">rRNA processing</keyword>
<keyword id="KW-0699">rRNA-binding</keyword>
<keyword id="KW-0819">tRNA processing</keyword>
<organism>
    <name type="scientific">Shouchella clausii (strain KSM-K16)</name>
    <name type="common">Alkalihalobacillus clausii</name>
    <dbReference type="NCBI Taxonomy" id="66692"/>
    <lineage>
        <taxon>Bacteria</taxon>
        <taxon>Bacillati</taxon>
        <taxon>Bacillota</taxon>
        <taxon>Bacilli</taxon>
        <taxon>Bacillales</taxon>
        <taxon>Bacillaceae</taxon>
        <taxon>Shouchella</taxon>
    </lineage>
</organism>
<comment type="function">
    <text evidence="1">Digests double-stranded RNA. Involved in the processing of primary rRNA transcript to yield the immediate precursors to the large and small rRNAs (23S and 16S). Processes some mRNAs, and tRNAs when they are encoded in the rRNA operon. Processes pre-crRNA and tracrRNA of type II CRISPR loci if present in the organism.</text>
</comment>
<comment type="catalytic activity">
    <reaction evidence="1">
        <text>Endonucleolytic cleavage to 5'-phosphomonoester.</text>
        <dbReference type="EC" id="3.1.26.3"/>
    </reaction>
</comment>
<comment type="cofactor">
    <cofactor evidence="1">
        <name>Mg(2+)</name>
        <dbReference type="ChEBI" id="CHEBI:18420"/>
    </cofactor>
</comment>
<comment type="subunit">
    <text evidence="1">Homodimer.</text>
</comment>
<comment type="subcellular location">
    <subcellularLocation>
        <location evidence="1">Cytoplasm</location>
    </subcellularLocation>
</comment>
<comment type="similarity">
    <text evidence="1">Belongs to the ribonuclease III family.</text>
</comment>